<feature type="chain" id="PRO_0000266499" description="Large ribosomal subunit protein uL14">
    <location>
        <begin position="1"/>
        <end position="122"/>
    </location>
</feature>
<name>RL14_LAWIP</name>
<evidence type="ECO:0000255" key="1">
    <source>
        <dbReference type="HAMAP-Rule" id="MF_01367"/>
    </source>
</evidence>
<evidence type="ECO:0000305" key="2"/>
<gene>
    <name evidence="1" type="primary">rplN</name>
    <name type="ordered locus">LI0969</name>
</gene>
<accession>Q1MPQ4</accession>
<sequence length="122" mass="13305">MIQVESTLQVADNSGAKKVACIKVLGGSKRRYATVGDIIVVSVKEAIPHSKVKKGEVLQAVIVRTKKEVRRMDGSYIKFDSNAAVLLSKQGEPVGTRIFGPVARELRARNFMKIISLAPEVL</sequence>
<dbReference type="EMBL" id="AM180252">
    <property type="protein sequence ID" value="CAJ55023.1"/>
    <property type="molecule type" value="Genomic_DNA"/>
</dbReference>
<dbReference type="RefSeq" id="WP_011527052.1">
    <property type="nucleotide sequence ID" value="NC_008011.1"/>
</dbReference>
<dbReference type="SMR" id="Q1MPQ4"/>
<dbReference type="STRING" id="363253.LI0969"/>
<dbReference type="KEGG" id="lip:LI0969"/>
<dbReference type="eggNOG" id="COG0093">
    <property type="taxonomic scope" value="Bacteria"/>
</dbReference>
<dbReference type="HOGENOM" id="CLU_095071_2_1_7"/>
<dbReference type="OrthoDB" id="9806379at2"/>
<dbReference type="Proteomes" id="UP000002430">
    <property type="component" value="Chromosome"/>
</dbReference>
<dbReference type="GO" id="GO:0022625">
    <property type="term" value="C:cytosolic large ribosomal subunit"/>
    <property type="evidence" value="ECO:0007669"/>
    <property type="project" value="TreeGrafter"/>
</dbReference>
<dbReference type="GO" id="GO:0070180">
    <property type="term" value="F:large ribosomal subunit rRNA binding"/>
    <property type="evidence" value="ECO:0007669"/>
    <property type="project" value="TreeGrafter"/>
</dbReference>
<dbReference type="GO" id="GO:0003735">
    <property type="term" value="F:structural constituent of ribosome"/>
    <property type="evidence" value="ECO:0007669"/>
    <property type="project" value="InterPro"/>
</dbReference>
<dbReference type="GO" id="GO:0006412">
    <property type="term" value="P:translation"/>
    <property type="evidence" value="ECO:0007669"/>
    <property type="project" value="UniProtKB-UniRule"/>
</dbReference>
<dbReference type="CDD" id="cd00337">
    <property type="entry name" value="Ribosomal_uL14"/>
    <property type="match status" value="1"/>
</dbReference>
<dbReference type="FunFam" id="2.40.150.20:FF:000001">
    <property type="entry name" value="50S ribosomal protein L14"/>
    <property type="match status" value="1"/>
</dbReference>
<dbReference type="Gene3D" id="2.40.150.20">
    <property type="entry name" value="Ribosomal protein L14"/>
    <property type="match status" value="1"/>
</dbReference>
<dbReference type="HAMAP" id="MF_01367">
    <property type="entry name" value="Ribosomal_uL14"/>
    <property type="match status" value="1"/>
</dbReference>
<dbReference type="InterPro" id="IPR000218">
    <property type="entry name" value="Ribosomal_uL14"/>
</dbReference>
<dbReference type="InterPro" id="IPR005745">
    <property type="entry name" value="Ribosomal_uL14_bac-type"/>
</dbReference>
<dbReference type="InterPro" id="IPR019972">
    <property type="entry name" value="Ribosomal_uL14_CS"/>
</dbReference>
<dbReference type="InterPro" id="IPR036853">
    <property type="entry name" value="Ribosomal_uL14_sf"/>
</dbReference>
<dbReference type="NCBIfam" id="TIGR01067">
    <property type="entry name" value="rplN_bact"/>
    <property type="match status" value="1"/>
</dbReference>
<dbReference type="PANTHER" id="PTHR11761">
    <property type="entry name" value="50S/60S RIBOSOMAL PROTEIN L14/L23"/>
    <property type="match status" value="1"/>
</dbReference>
<dbReference type="PANTHER" id="PTHR11761:SF3">
    <property type="entry name" value="LARGE RIBOSOMAL SUBUNIT PROTEIN UL14M"/>
    <property type="match status" value="1"/>
</dbReference>
<dbReference type="Pfam" id="PF00238">
    <property type="entry name" value="Ribosomal_L14"/>
    <property type="match status" value="1"/>
</dbReference>
<dbReference type="SMART" id="SM01374">
    <property type="entry name" value="Ribosomal_L14"/>
    <property type="match status" value="1"/>
</dbReference>
<dbReference type="SUPFAM" id="SSF50193">
    <property type="entry name" value="Ribosomal protein L14"/>
    <property type="match status" value="1"/>
</dbReference>
<dbReference type="PROSITE" id="PS00049">
    <property type="entry name" value="RIBOSOMAL_L14"/>
    <property type="match status" value="1"/>
</dbReference>
<comment type="function">
    <text evidence="1">Binds to 23S rRNA. Forms part of two intersubunit bridges in the 70S ribosome.</text>
</comment>
<comment type="subunit">
    <text evidence="1">Part of the 50S ribosomal subunit. Forms a cluster with proteins L3 and L19. In the 70S ribosome, L14 and L19 interact and together make contacts with the 16S rRNA in bridges B5 and B8.</text>
</comment>
<comment type="similarity">
    <text evidence="1">Belongs to the universal ribosomal protein uL14 family.</text>
</comment>
<protein>
    <recommendedName>
        <fullName evidence="1">Large ribosomal subunit protein uL14</fullName>
    </recommendedName>
    <alternativeName>
        <fullName evidence="2">50S ribosomal protein L14</fullName>
    </alternativeName>
</protein>
<organism>
    <name type="scientific">Lawsonia intracellularis (strain PHE/MN1-00)</name>
    <dbReference type="NCBI Taxonomy" id="363253"/>
    <lineage>
        <taxon>Bacteria</taxon>
        <taxon>Pseudomonadati</taxon>
        <taxon>Thermodesulfobacteriota</taxon>
        <taxon>Desulfovibrionia</taxon>
        <taxon>Desulfovibrionales</taxon>
        <taxon>Desulfovibrionaceae</taxon>
        <taxon>Lawsonia</taxon>
    </lineage>
</organism>
<reference key="1">
    <citation type="submission" date="2005-11" db="EMBL/GenBank/DDBJ databases">
        <title>The complete genome sequence of Lawsonia intracellularis: the causative agent of proliferative enteropathy.</title>
        <authorList>
            <person name="Kaur K."/>
            <person name="Zhang Q."/>
            <person name="Beckler D."/>
            <person name="Munir S."/>
            <person name="Li L."/>
            <person name="Kinsley K."/>
            <person name="Herron L."/>
            <person name="Peterson A."/>
            <person name="May B."/>
            <person name="Singh S."/>
            <person name="Gebhart C."/>
            <person name="Kapur V."/>
        </authorList>
    </citation>
    <scope>NUCLEOTIDE SEQUENCE [LARGE SCALE GENOMIC DNA]</scope>
    <source>
        <strain>PHE/MN1-00</strain>
    </source>
</reference>
<keyword id="KW-1185">Reference proteome</keyword>
<keyword id="KW-0687">Ribonucleoprotein</keyword>
<keyword id="KW-0689">Ribosomal protein</keyword>
<keyword id="KW-0694">RNA-binding</keyword>
<keyword id="KW-0699">rRNA-binding</keyword>
<proteinExistence type="inferred from homology"/>